<comment type="function">
    <text evidence="1 6 7">E3 ubiquitin ligase that plays a crucial role in the activation of the IKBKE-dependent branch of the type I interferon signaling pathway (PubMed:24882218). In concert with the ubiquitin-conjugating E2 enzyme UBE2K, synthesizes unanchored 'Lys-48'-linked polyubiquitin chains that promote the oligomerization and autophosphorylation of IKBKE leading to stimulation of an antiviral response (PubMed:24882218). Also ubiquitinates MYC and inhibits its transcription activation activity, maintaining the pluripotency of embryonic stem cells (PubMed:22328504). Promotes the association of unanchored 'Lys-48'-polyubiquitin chains with DHX16 leading to enhancement of RIGI-mediated innate antiviral immune response (By similarity).</text>
</comment>
<comment type="catalytic activity">
    <reaction evidence="6">
        <text>S-ubiquitinyl-[E2 ubiquitin-conjugating enzyme]-L-cysteine + [acceptor protein]-L-lysine = [E2 ubiquitin-conjugating enzyme]-L-cysteine + N(6)-ubiquitinyl-[acceptor protein]-L-lysine.</text>
        <dbReference type="EC" id="2.3.2.27"/>
    </reaction>
</comment>
<comment type="pathway">
    <text evidence="6">Protein modification; protein ubiquitination.</text>
</comment>
<comment type="subunit">
    <text evidence="1 6">Homotrimer. Forms heteromultimers (via B30.2/SPRY domain) with TRIM5 (By similarity). Interacts with MYC (PubMed:22328504). Interacts (via SPRY domain) with IKBKE (By similarity). Interacts with VAMP8; this interaction contributes to the activation of the type I interferon antiviral response (By similarity). Interacts with DHX16 (By similarity).</text>
</comment>
<comment type="subcellular location">
    <subcellularLocation>
        <location evidence="6">Cytoplasm</location>
    </subcellularLocation>
</comment>
<comment type="domain">
    <text evidence="1">The B-box zinc finger and the linker region between the coiled coil and B30.2/SPRY domains contribute to higher order self-association.</text>
</comment>
<comment type="similarity">
    <text evidence="8">Belongs to the TRIM/RBCC family.</text>
</comment>
<accession>Q8BGE7</accession>
<accession>B2RSQ8</accession>
<accession>Q99PQ6</accession>
<reference key="1">
    <citation type="journal article" date="2005" name="Science">
        <title>The transcriptional landscape of the mammalian genome.</title>
        <authorList>
            <person name="Carninci P."/>
            <person name="Kasukawa T."/>
            <person name="Katayama S."/>
            <person name="Gough J."/>
            <person name="Frith M.C."/>
            <person name="Maeda N."/>
            <person name="Oyama R."/>
            <person name="Ravasi T."/>
            <person name="Lenhard B."/>
            <person name="Wells C."/>
            <person name="Kodzius R."/>
            <person name="Shimokawa K."/>
            <person name="Bajic V.B."/>
            <person name="Brenner S.E."/>
            <person name="Batalov S."/>
            <person name="Forrest A.R."/>
            <person name="Zavolan M."/>
            <person name="Davis M.J."/>
            <person name="Wilming L.G."/>
            <person name="Aidinis V."/>
            <person name="Allen J.E."/>
            <person name="Ambesi-Impiombato A."/>
            <person name="Apweiler R."/>
            <person name="Aturaliya R.N."/>
            <person name="Bailey T.L."/>
            <person name="Bansal M."/>
            <person name="Baxter L."/>
            <person name="Beisel K.W."/>
            <person name="Bersano T."/>
            <person name="Bono H."/>
            <person name="Chalk A.M."/>
            <person name="Chiu K.P."/>
            <person name="Choudhary V."/>
            <person name="Christoffels A."/>
            <person name="Clutterbuck D.R."/>
            <person name="Crowe M.L."/>
            <person name="Dalla E."/>
            <person name="Dalrymple B.P."/>
            <person name="de Bono B."/>
            <person name="Della Gatta G."/>
            <person name="di Bernardo D."/>
            <person name="Down T."/>
            <person name="Engstrom P."/>
            <person name="Fagiolini M."/>
            <person name="Faulkner G."/>
            <person name="Fletcher C.F."/>
            <person name="Fukushima T."/>
            <person name="Furuno M."/>
            <person name="Futaki S."/>
            <person name="Gariboldi M."/>
            <person name="Georgii-Hemming P."/>
            <person name="Gingeras T.R."/>
            <person name="Gojobori T."/>
            <person name="Green R.E."/>
            <person name="Gustincich S."/>
            <person name="Harbers M."/>
            <person name="Hayashi Y."/>
            <person name="Hensch T.K."/>
            <person name="Hirokawa N."/>
            <person name="Hill D."/>
            <person name="Huminiecki L."/>
            <person name="Iacono M."/>
            <person name="Ikeo K."/>
            <person name="Iwama A."/>
            <person name="Ishikawa T."/>
            <person name="Jakt M."/>
            <person name="Kanapin A."/>
            <person name="Katoh M."/>
            <person name="Kawasawa Y."/>
            <person name="Kelso J."/>
            <person name="Kitamura H."/>
            <person name="Kitano H."/>
            <person name="Kollias G."/>
            <person name="Krishnan S.P."/>
            <person name="Kruger A."/>
            <person name="Kummerfeld S.K."/>
            <person name="Kurochkin I.V."/>
            <person name="Lareau L.F."/>
            <person name="Lazarevic D."/>
            <person name="Lipovich L."/>
            <person name="Liu J."/>
            <person name="Liuni S."/>
            <person name="McWilliam S."/>
            <person name="Madan Babu M."/>
            <person name="Madera M."/>
            <person name="Marchionni L."/>
            <person name="Matsuda H."/>
            <person name="Matsuzawa S."/>
            <person name="Miki H."/>
            <person name="Mignone F."/>
            <person name="Miyake S."/>
            <person name="Morris K."/>
            <person name="Mottagui-Tabar S."/>
            <person name="Mulder N."/>
            <person name="Nakano N."/>
            <person name="Nakauchi H."/>
            <person name="Ng P."/>
            <person name="Nilsson R."/>
            <person name="Nishiguchi S."/>
            <person name="Nishikawa S."/>
            <person name="Nori F."/>
            <person name="Ohara O."/>
            <person name="Okazaki Y."/>
            <person name="Orlando V."/>
            <person name="Pang K.C."/>
            <person name="Pavan W.J."/>
            <person name="Pavesi G."/>
            <person name="Pesole G."/>
            <person name="Petrovsky N."/>
            <person name="Piazza S."/>
            <person name="Reed J."/>
            <person name="Reid J.F."/>
            <person name="Ring B.Z."/>
            <person name="Ringwald M."/>
            <person name="Rost B."/>
            <person name="Ruan Y."/>
            <person name="Salzberg S.L."/>
            <person name="Sandelin A."/>
            <person name="Schneider C."/>
            <person name="Schoenbach C."/>
            <person name="Sekiguchi K."/>
            <person name="Semple C.A."/>
            <person name="Seno S."/>
            <person name="Sessa L."/>
            <person name="Sheng Y."/>
            <person name="Shibata Y."/>
            <person name="Shimada H."/>
            <person name="Shimada K."/>
            <person name="Silva D."/>
            <person name="Sinclair B."/>
            <person name="Sperling S."/>
            <person name="Stupka E."/>
            <person name="Sugiura K."/>
            <person name="Sultana R."/>
            <person name="Takenaka Y."/>
            <person name="Taki K."/>
            <person name="Tammoja K."/>
            <person name="Tan S.L."/>
            <person name="Tang S."/>
            <person name="Taylor M.S."/>
            <person name="Tegner J."/>
            <person name="Teichmann S.A."/>
            <person name="Ueda H.R."/>
            <person name="van Nimwegen E."/>
            <person name="Verardo R."/>
            <person name="Wei C.L."/>
            <person name="Yagi K."/>
            <person name="Yamanishi H."/>
            <person name="Zabarovsky E."/>
            <person name="Zhu S."/>
            <person name="Zimmer A."/>
            <person name="Hide W."/>
            <person name="Bult C."/>
            <person name="Grimmond S.M."/>
            <person name="Teasdale R.D."/>
            <person name="Liu E.T."/>
            <person name="Brusic V."/>
            <person name="Quackenbush J."/>
            <person name="Wahlestedt C."/>
            <person name="Mattick J.S."/>
            <person name="Hume D.A."/>
            <person name="Kai C."/>
            <person name="Sasaki D."/>
            <person name="Tomaru Y."/>
            <person name="Fukuda S."/>
            <person name="Kanamori-Katayama M."/>
            <person name="Suzuki M."/>
            <person name="Aoki J."/>
            <person name="Arakawa T."/>
            <person name="Iida J."/>
            <person name="Imamura K."/>
            <person name="Itoh M."/>
            <person name="Kato T."/>
            <person name="Kawaji H."/>
            <person name="Kawagashira N."/>
            <person name="Kawashima T."/>
            <person name="Kojima M."/>
            <person name="Kondo S."/>
            <person name="Konno H."/>
            <person name="Nakano K."/>
            <person name="Ninomiya N."/>
            <person name="Nishio T."/>
            <person name="Okada M."/>
            <person name="Plessy C."/>
            <person name="Shibata K."/>
            <person name="Shiraki T."/>
            <person name="Suzuki S."/>
            <person name="Tagami M."/>
            <person name="Waki K."/>
            <person name="Watahiki A."/>
            <person name="Okamura-Oho Y."/>
            <person name="Suzuki H."/>
            <person name="Kawai J."/>
            <person name="Hayashizaki Y."/>
        </authorList>
    </citation>
    <scope>NUCLEOTIDE SEQUENCE [LARGE SCALE MRNA]</scope>
    <source>
        <strain>C57BL/6J</strain>
        <tissue>Lung</tissue>
    </source>
</reference>
<reference key="2">
    <citation type="journal article" date="2004" name="Genome Res.">
        <title>The status, quality, and expansion of the NIH full-length cDNA project: the Mammalian Gene Collection (MGC).</title>
        <authorList>
            <consortium name="The MGC Project Team"/>
        </authorList>
    </citation>
    <scope>NUCLEOTIDE SEQUENCE [LARGE SCALE MRNA]</scope>
    <source>
        <tissue>Brain</tissue>
    </source>
</reference>
<reference key="3">
    <citation type="journal article" date="2001" name="EMBO J.">
        <title>The tripartite motif family identifies cell compartments.</title>
        <authorList>
            <person name="Reymond A."/>
            <person name="Meroni G."/>
            <person name="Fantozzi A."/>
            <person name="Merla G."/>
            <person name="Cairo S."/>
            <person name="Luzi L."/>
            <person name="Riganelli D."/>
            <person name="Zanaria E."/>
            <person name="Messali S."/>
            <person name="Cainarca S."/>
            <person name="Guffanti A."/>
            <person name="Minucci S."/>
            <person name="Pelicci P.G."/>
            <person name="Ballabio A."/>
        </authorList>
    </citation>
    <scope>NUCLEOTIDE SEQUENCE [MRNA] OF 55-205</scope>
</reference>
<reference key="4">
    <citation type="journal article" date="2012" name="J. Cell Sci.">
        <title>TRIM6 interacts with Myc and maintains the pluripotency of mouse embryonic stem cells.</title>
        <authorList>
            <person name="Sato T."/>
            <person name="Okumura F."/>
            <person name="Ariga T."/>
            <person name="Hatakeyama S."/>
        </authorList>
    </citation>
    <scope>FUNCTION</scope>
    <scope>SUBCELLULAR LOCATION</scope>
    <scope>INTERACTION WITH MYC</scope>
</reference>
<reference key="5">
    <citation type="journal article" date="2014" name="Immunity">
        <title>Unanchored K48-linked polyubiquitin synthesized by the E3-ubiquitin ligase TRIM6 stimulates the interferon-IKKepsilon kinase-mediated antiviral response.</title>
        <authorList>
            <person name="Rajsbaum R."/>
            <person name="Versteeg G.A."/>
            <person name="Schmid S."/>
            <person name="Maestre A.M."/>
            <person name="Belicha-Villanueva A."/>
            <person name="Martinez-Romero C."/>
            <person name="Patel J.R."/>
            <person name="Morrison J."/>
            <person name="Pisanelli G."/>
            <person name="Miorin L."/>
            <person name="Laurent-Rolle M."/>
            <person name="Moulton H.M."/>
            <person name="Stein D.A."/>
            <person name="Fernandez-Sesma A."/>
            <person name="tenOever B.R."/>
            <person name="Garcia-Sastre A."/>
        </authorList>
    </citation>
    <scope>FUNCTION</scope>
</reference>
<proteinExistence type="evidence at protein level"/>
<keyword id="KW-0175">Coiled coil</keyword>
<keyword id="KW-0963">Cytoplasm</keyword>
<keyword id="KW-0479">Metal-binding</keyword>
<keyword id="KW-1185">Reference proteome</keyword>
<keyword id="KW-0808">Transferase</keyword>
<keyword id="KW-0833">Ubl conjugation pathway</keyword>
<keyword id="KW-0862">Zinc</keyword>
<keyword id="KW-0863">Zinc-finger</keyword>
<name>TRIM6_MOUSE</name>
<sequence>MTSTVLVDIRDEVTCPICLELLTEPLSIDCGHSFCQVCIIGNSNNSVFGQGGRSSCPVCRTSYQPGNLRPNRHLAAIVKRLREVALCPGKQLEVIFCALHGEKLQLFCKEDGKLICWLCERSQEHRGHHTFLMEEVAQEYQDMFQESLKKLRREQQEAEKLKALIQEKRESWKSQVEPEKRRIQTEFKQLRSILDREEQRELKKLEVEERKGLSIIEKAEGDLIHQSQSLKDLISDLEHRCQGSTVELLQDVGDVTKRSEFWTLRKPQALPTKLKSLFRAPDLRKMLKVFRELTDVQSYWVDVTLNPQTANLNLVLSKNRRQVRFVGAQLSEPSSLEEHYDCSVLGSQHFSSGKYYWEVDVSKKTAWILGVCSTPVDPMFSFSQYSSKQGAYSRYQPQCGYWVIGLQCKHEYRAYEDSSPSLLLSMTVPPRRIGIFLDCEAGTVSFYNVTNHGLPIYTFSKYYFPSALCPYFNPCSCIVPMTLRRPTS</sequence>
<organism>
    <name type="scientific">Mus musculus</name>
    <name type="common">Mouse</name>
    <dbReference type="NCBI Taxonomy" id="10090"/>
    <lineage>
        <taxon>Eukaryota</taxon>
        <taxon>Metazoa</taxon>
        <taxon>Chordata</taxon>
        <taxon>Craniata</taxon>
        <taxon>Vertebrata</taxon>
        <taxon>Euteleostomi</taxon>
        <taxon>Mammalia</taxon>
        <taxon>Eutheria</taxon>
        <taxon>Euarchontoglires</taxon>
        <taxon>Glires</taxon>
        <taxon>Rodentia</taxon>
        <taxon>Myomorpha</taxon>
        <taxon>Muroidea</taxon>
        <taxon>Muridae</taxon>
        <taxon>Murinae</taxon>
        <taxon>Mus</taxon>
        <taxon>Mus</taxon>
    </lineage>
</organism>
<evidence type="ECO:0000250" key="1">
    <source>
        <dbReference type="UniProtKB" id="Q9C030"/>
    </source>
</evidence>
<evidence type="ECO:0000255" key="2"/>
<evidence type="ECO:0000255" key="3">
    <source>
        <dbReference type="PROSITE-ProRule" id="PRU00024"/>
    </source>
</evidence>
<evidence type="ECO:0000255" key="4">
    <source>
        <dbReference type="PROSITE-ProRule" id="PRU00175"/>
    </source>
</evidence>
<evidence type="ECO:0000255" key="5">
    <source>
        <dbReference type="PROSITE-ProRule" id="PRU00548"/>
    </source>
</evidence>
<evidence type="ECO:0000269" key="6">
    <source>
    </source>
</evidence>
<evidence type="ECO:0000269" key="7">
    <source>
    </source>
</evidence>
<evidence type="ECO:0000305" key="8"/>
<dbReference type="EC" id="2.3.2.27" evidence="6"/>
<dbReference type="EMBL" id="AK033396">
    <property type="protein sequence ID" value="BAC28267.1"/>
    <property type="molecule type" value="mRNA"/>
</dbReference>
<dbReference type="EMBL" id="AK049238">
    <property type="protein sequence ID" value="BAC33629.1"/>
    <property type="molecule type" value="mRNA"/>
</dbReference>
<dbReference type="EMBL" id="BC138965">
    <property type="protein sequence ID" value="AAI38966.1"/>
    <property type="molecule type" value="mRNA"/>
</dbReference>
<dbReference type="EMBL" id="AF220031">
    <property type="protein sequence ID" value="AAG53485.1"/>
    <property type="molecule type" value="mRNA"/>
</dbReference>
<dbReference type="CCDS" id="CCDS40065.1"/>
<dbReference type="RefSeq" id="NP_001013637.1">
    <property type="nucleotide sequence ID" value="NM_001013616.2"/>
</dbReference>
<dbReference type="RefSeq" id="XP_006508427.1">
    <property type="nucleotide sequence ID" value="XM_006508364.3"/>
</dbReference>
<dbReference type="RefSeq" id="XP_006508428.1">
    <property type="nucleotide sequence ID" value="XM_006508365.4"/>
</dbReference>
<dbReference type="RefSeq" id="XP_006508429.1">
    <property type="nucleotide sequence ID" value="XM_006508366.4"/>
</dbReference>
<dbReference type="SMR" id="Q8BGE7"/>
<dbReference type="FunCoup" id="Q8BGE7">
    <property type="interactions" value="1079"/>
</dbReference>
<dbReference type="STRING" id="10090.ENSMUSP00000095782"/>
<dbReference type="iPTMnet" id="Q8BGE7"/>
<dbReference type="PhosphoSitePlus" id="Q8BGE7"/>
<dbReference type="PaxDb" id="10090-ENSMUSP00000095782"/>
<dbReference type="Antibodypedia" id="11069">
    <property type="antibodies" value="109 antibodies from 26 providers"/>
</dbReference>
<dbReference type="DNASU" id="94088"/>
<dbReference type="Ensembl" id="ENSMUST00000098180.10">
    <property type="protein sequence ID" value="ENSMUSP00000095782.4"/>
    <property type="gene ID" value="ENSMUSG00000072244.12"/>
</dbReference>
<dbReference type="GeneID" id="94088"/>
<dbReference type="KEGG" id="mmu:94088"/>
<dbReference type="UCSC" id="uc009ivq.1">
    <property type="organism name" value="mouse"/>
</dbReference>
<dbReference type="AGR" id="MGI:2137352"/>
<dbReference type="CTD" id="117854"/>
<dbReference type="MGI" id="MGI:2137352">
    <property type="gene designation" value="Trim6"/>
</dbReference>
<dbReference type="VEuPathDB" id="HostDB:ENSMUSG00000072244"/>
<dbReference type="eggNOG" id="KOG2177">
    <property type="taxonomic scope" value="Eukaryota"/>
</dbReference>
<dbReference type="GeneTree" id="ENSGT00940000163021"/>
<dbReference type="HOGENOM" id="CLU_013137_0_3_1"/>
<dbReference type="InParanoid" id="Q8BGE7"/>
<dbReference type="OMA" id="VEPTYCF"/>
<dbReference type="OrthoDB" id="6105938at2759"/>
<dbReference type="PhylomeDB" id="Q8BGE7"/>
<dbReference type="TreeFam" id="TF338674"/>
<dbReference type="UniPathway" id="UPA00143"/>
<dbReference type="BioGRID-ORCS" id="94088">
    <property type="hits" value="2 hits in 79 CRISPR screens"/>
</dbReference>
<dbReference type="ChiTaRS" id="Trim6">
    <property type="organism name" value="mouse"/>
</dbReference>
<dbReference type="PRO" id="PR:Q8BGE7"/>
<dbReference type="Proteomes" id="UP000000589">
    <property type="component" value="Chromosome 7"/>
</dbReference>
<dbReference type="RNAct" id="Q8BGE7">
    <property type="molecule type" value="protein"/>
</dbReference>
<dbReference type="Bgee" id="ENSMUSG00000072244">
    <property type="expression patterns" value="Expressed in ectoplacental cone and 77 other cell types or tissues"/>
</dbReference>
<dbReference type="ExpressionAtlas" id="Q8BGE7">
    <property type="expression patterns" value="baseline and differential"/>
</dbReference>
<dbReference type="GO" id="GO:0005737">
    <property type="term" value="C:cytoplasm"/>
    <property type="evidence" value="ECO:0000314"/>
    <property type="project" value="MGI"/>
</dbReference>
<dbReference type="GO" id="GO:0005829">
    <property type="term" value="C:cytosol"/>
    <property type="evidence" value="ECO:0000315"/>
    <property type="project" value="UniProtKB"/>
</dbReference>
<dbReference type="GO" id="GO:0005634">
    <property type="term" value="C:nucleus"/>
    <property type="evidence" value="ECO:0000315"/>
    <property type="project" value="UniProtKB"/>
</dbReference>
<dbReference type="GO" id="GO:0140297">
    <property type="term" value="F:DNA-binding transcription factor binding"/>
    <property type="evidence" value="ECO:0000353"/>
    <property type="project" value="UniProtKB"/>
</dbReference>
<dbReference type="GO" id="GO:0042802">
    <property type="term" value="F:identical protein binding"/>
    <property type="evidence" value="ECO:0007669"/>
    <property type="project" value="Ensembl"/>
</dbReference>
<dbReference type="GO" id="GO:0019901">
    <property type="term" value="F:protein kinase binding"/>
    <property type="evidence" value="ECO:0000353"/>
    <property type="project" value="UniProtKB"/>
</dbReference>
<dbReference type="GO" id="GO:1990782">
    <property type="term" value="F:protein tyrosine kinase binding"/>
    <property type="evidence" value="ECO:0007669"/>
    <property type="project" value="Ensembl"/>
</dbReference>
<dbReference type="GO" id="GO:0030674">
    <property type="term" value="F:protein-macromolecule adaptor activity"/>
    <property type="evidence" value="ECO:0007669"/>
    <property type="project" value="Ensembl"/>
</dbReference>
<dbReference type="GO" id="GO:0061630">
    <property type="term" value="F:ubiquitin protein ligase activity"/>
    <property type="evidence" value="ECO:0007669"/>
    <property type="project" value="Ensembl"/>
</dbReference>
<dbReference type="GO" id="GO:0008270">
    <property type="term" value="F:zinc ion binding"/>
    <property type="evidence" value="ECO:0007669"/>
    <property type="project" value="UniProtKB-KW"/>
</dbReference>
<dbReference type="GO" id="GO:0140374">
    <property type="term" value="P:antiviral innate immune response"/>
    <property type="evidence" value="ECO:0007669"/>
    <property type="project" value="Ensembl"/>
</dbReference>
<dbReference type="GO" id="GO:0035458">
    <property type="term" value="P:cellular response to interferon-beta"/>
    <property type="evidence" value="ECO:0007669"/>
    <property type="project" value="Ensembl"/>
</dbReference>
<dbReference type="GO" id="GO:0098586">
    <property type="term" value="P:cellular response to virus"/>
    <property type="evidence" value="ECO:0000314"/>
    <property type="project" value="UniProtKB"/>
</dbReference>
<dbReference type="GO" id="GO:0010994">
    <property type="term" value="P:free ubiquitin chain polymerization"/>
    <property type="evidence" value="ECO:0007669"/>
    <property type="project" value="Ensembl"/>
</dbReference>
<dbReference type="GO" id="GO:0045892">
    <property type="term" value="P:negative regulation of DNA-templated transcription"/>
    <property type="evidence" value="ECO:0000314"/>
    <property type="project" value="UniProtKB"/>
</dbReference>
<dbReference type="GO" id="GO:0010629">
    <property type="term" value="P:negative regulation of gene expression"/>
    <property type="evidence" value="ECO:0007669"/>
    <property type="project" value="Ensembl"/>
</dbReference>
<dbReference type="GO" id="GO:2000737">
    <property type="term" value="P:negative regulation of stem cell differentiation"/>
    <property type="evidence" value="ECO:0000315"/>
    <property type="project" value="UniProtKB"/>
</dbReference>
<dbReference type="GO" id="GO:0045071">
    <property type="term" value="P:negative regulation of viral genome replication"/>
    <property type="evidence" value="ECO:0000315"/>
    <property type="project" value="UniProtKB"/>
</dbReference>
<dbReference type="GO" id="GO:0002720">
    <property type="term" value="P:positive regulation of cytokine production involved in immune response"/>
    <property type="evidence" value="ECO:0007669"/>
    <property type="project" value="Ensembl"/>
</dbReference>
<dbReference type="GO" id="GO:0002230">
    <property type="term" value="P:positive regulation of defense response to virus by host"/>
    <property type="evidence" value="ECO:0007669"/>
    <property type="project" value="Ensembl"/>
</dbReference>
<dbReference type="GO" id="GO:0010628">
    <property type="term" value="P:positive regulation of gene expression"/>
    <property type="evidence" value="ECO:0000315"/>
    <property type="project" value="UniProtKB"/>
</dbReference>
<dbReference type="GO" id="GO:0060340">
    <property type="term" value="P:positive regulation of type I interferon-mediated signaling pathway"/>
    <property type="evidence" value="ECO:0000315"/>
    <property type="project" value="UniProtKB"/>
</dbReference>
<dbReference type="GO" id="GO:0070936">
    <property type="term" value="P:protein K48-linked ubiquitination"/>
    <property type="evidence" value="ECO:0007669"/>
    <property type="project" value="Ensembl"/>
</dbReference>
<dbReference type="GO" id="GO:0000209">
    <property type="term" value="P:protein polyubiquitination"/>
    <property type="evidence" value="ECO:0000314"/>
    <property type="project" value="UniProtKB"/>
</dbReference>
<dbReference type="GO" id="GO:0032496">
    <property type="term" value="P:response to lipopolysaccharide"/>
    <property type="evidence" value="ECO:0007669"/>
    <property type="project" value="Ensembl"/>
</dbReference>
<dbReference type="CDD" id="cd19761">
    <property type="entry name" value="Bbox2_TRIM5-like"/>
    <property type="match status" value="1"/>
</dbReference>
<dbReference type="CDD" id="cd16591">
    <property type="entry name" value="RING-HC_TRIM5-like_C-IV"/>
    <property type="match status" value="1"/>
</dbReference>
<dbReference type="CDD" id="cd15823">
    <property type="entry name" value="SPRY_PRY_TRIM6"/>
    <property type="match status" value="1"/>
</dbReference>
<dbReference type="FunFam" id="2.60.120.920:FF:000023">
    <property type="entry name" value="Tripartite motif-containing 5 (Predicted)"/>
    <property type="match status" value="1"/>
</dbReference>
<dbReference type="FunFam" id="3.30.160.60:FF:000386">
    <property type="entry name" value="Tripartite motif-containing 5 (Predicted)"/>
    <property type="match status" value="1"/>
</dbReference>
<dbReference type="FunFam" id="3.30.40.10:FF:000144">
    <property type="entry name" value="Tripartite motif-containing 5 (Predicted)"/>
    <property type="match status" value="1"/>
</dbReference>
<dbReference type="Gene3D" id="2.60.120.920">
    <property type="match status" value="1"/>
</dbReference>
<dbReference type="Gene3D" id="3.30.160.60">
    <property type="entry name" value="Classic Zinc Finger"/>
    <property type="match status" value="1"/>
</dbReference>
<dbReference type="Gene3D" id="3.30.40.10">
    <property type="entry name" value="Zinc/RING finger domain, C3HC4 (zinc finger)"/>
    <property type="match status" value="1"/>
</dbReference>
<dbReference type="InterPro" id="IPR001870">
    <property type="entry name" value="B30.2/SPRY"/>
</dbReference>
<dbReference type="InterPro" id="IPR043136">
    <property type="entry name" value="B30.2/SPRY_sf"/>
</dbReference>
<dbReference type="InterPro" id="IPR003879">
    <property type="entry name" value="Butyrophylin_SPRY"/>
</dbReference>
<dbReference type="InterPro" id="IPR013320">
    <property type="entry name" value="ConA-like_dom_sf"/>
</dbReference>
<dbReference type="InterPro" id="IPR006574">
    <property type="entry name" value="PRY"/>
</dbReference>
<dbReference type="InterPro" id="IPR035828">
    <property type="entry name" value="PRY/SPRY_TRIM6"/>
</dbReference>
<dbReference type="InterPro" id="IPR003877">
    <property type="entry name" value="SPRY_dom"/>
</dbReference>
<dbReference type="InterPro" id="IPR050143">
    <property type="entry name" value="TRIM/RBCC"/>
</dbReference>
<dbReference type="InterPro" id="IPR027370">
    <property type="entry name" value="Znf-RING_euk"/>
</dbReference>
<dbReference type="InterPro" id="IPR000315">
    <property type="entry name" value="Znf_B-box"/>
</dbReference>
<dbReference type="InterPro" id="IPR001841">
    <property type="entry name" value="Znf_RING"/>
</dbReference>
<dbReference type="InterPro" id="IPR013083">
    <property type="entry name" value="Znf_RING/FYVE/PHD"/>
</dbReference>
<dbReference type="InterPro" id="IPR017907">
    <property type="entry name" value="Znf_RING_CS"/>
</dbReference>
<dbReference type="PANTHER" id="PTHR24103">
    <property type="entry name" value="E3 UBIQUITIN-PROTEIN LIGASE TRIM"/>
    <property type="match status" value="1"/>
</dbReference>
<dbReference type="Pfam" id="PF13765">
    <property type="entry name" value="PRY"/>
    <property type="match status" value="1"/>
</dbReference>
<dbReference type="Pfam" id="PF00622">
    <property type="entry name" value="SPRY"/>
    <property type="match status" value="1"/>
</dbReference>
<dbReference type="Pfam" id="PF00643">
    <property type="entry name" value="zf-B_box"/>
    <property type="match status" value="1"/>
</dbReference>
<dbReference type="Pfam" id="PF13445">
    <property type="entry name" value="zf-RING_UBOX"/>
    <property type="match status" value="1"/>
</dbReference>
<dbReference type="PRINTS" id="PR01407">
    <property type="entry name" value="BUTYPHLNCDUF"/>
</dbReference>
<dbReference type="SMART" id="SM00336">
    <property type="entry name" value="BBOX"/>
    <property type="match status" value="1"/>
</dbReference>
<dbReference type="SMART" id="SM00589">
    <property type="entry name" value="PRY"/>
    <property type="match status" value="1"/>
</dbReference>
<dbReference type="SMART" id="SM00184">
    <property type="entry name" value="RING"/>
    <property type="match status" value="1"/>
</dbReference>
<dbReference type="SMART" id="SM00449">
    <property type="entry name" value="SPRY"/>
    <property type="match status" value="1"/>
</dbReference>
<dbReference type="SUPFAM" id="SSF57845">
    <property type="entry name" value="B-box zinc-binding domain"/>
    <property type="match status" value="1"/>
</dbReference>
<dbReference type="SUPFAM" id="SSF49899">
    <property type="entry name" value="Concanavalin A-like lectins/glucanases"/>
    <property type="match status" value="1"/>
</dbReference>
<dbReference type="SUPFAM" id="SSF57850">
    <property type="entry name" value="RING/U-box"/>
    <property type="match status" value="1"/>
</dbReference>
<dbReference type="PROSITE" id="PS50188">
    <property type="entry name" value="B302_SPRY"/>
    <property type="match status" value="1"/>
</dbReference>
<dbReference type="PROSITE" id="PS50119">
    <property type="entry name" value="ZF_BBOX"/>
    <property type="match status" value="1"/>
</dbReference>
<dbReference type="PROSITE" id="PS00518">
    <property type="entry name" value="ZF_RING_1"/>
    <property type="match status" value="1"/>
</dbReference>
<dbReference type="PROSITE" id="PS50089">
    <property type="entry name" value="ZF_RING_2"/>
    <property type="match status" value="1"/>
</dbReference>
<feature type="chain" id="PRO_0000056203" description="Tripartite motif-containing protein 6">
    <location>
        <begin position="1"/>
        <end position="488"/>
    </location>
</feature>
<feature type="domain" description="B30.2/SPRY" evidence="5">
    <location>
        <begin position="282"/>
        <end position="488"/>
    </location>
</feature>
<feature type="zinc finger region" description="RING-type" evidence="4">
    <location>
        <begin position="15"/>
        <end position="60"/>
    </location>
</feature>
<feature type="zinc finger region" description="B box-type" evidence="3">
    <location>
        <begin position="92"/>
        <end position="133"/>
    </location>
</feature>
<feature type="coiled-coil region" evidence="2">
    <location>
        <begin position="132"/>
        <end position="223"/>
    </location>
</feature>
<feature type="binding site" evidence="3">
    <location>
        <position position="97"/>
    </location>
    <ligand>
        <name>Zn(2+)</name>
        <dbReference type="ChEBI" id="CHEBI:29105"/>
    </ligand>
</feature>
<feature type="binding site" evidence="3">
    <location>
        <position position="100"/>
    </location>
    <ligand>
        <name>Zn(2+)</name>
        <dbReference type="ChEBI" id="CHEBI:29105"/>
    </ligand>
</feature>
<feature type="binding site" evidence="3">
    <location>
        <position position="119"/>
    </location>
    <ligand>
        <name>Zn(2+)</name>
        <dbReference type="ChEBI" id="CHEBI:29105"/>
    </ligand>
</feature>
<feature type="binding site" evidence="3">
    <location>
        <position position="125"/>
    </location>
    <ligand>
        <name>Zn(2+)</name>
        <dbReference type="ChEBI" id="CHEBI:29105"/>
    </ligand>
</feature>
<protein>
    <recommendedName>
        <fullName>Tripartite motif-containing protein 6</fullName>
        <ecNumber evidence="6">2.3.2.27</ecNumber>
    </recommendedName>
    <alternativeName>
        <fullName evidence="8">RING-type E3 ubiquitin transferase TRIM6</fullName>
    </alternativeName>
</protein>
<gene>
    <name type="primary">Trim6</name>
</gene>